<proteinExistence type="inferred from homology"/>
<keyword id="KW-0325">Glycoprotein</keyword>
<keyword id="KW-0378">Hydrolase</keyword>
<keyword id="KW-0479">Metal-binding</keyword>
<keyword id="KW-0482">Metalloprotease</keyword>
<keyword id="KW-0645">Protease</keyword>
<keyword id="KW-1185">Reference proteome</keyword>
<keyword id="KW-0964">Secreted</keyword>
<keyword id="KW-0732">Signal</keyword>
<keyword id="KW-0862">Zinc</keyword>
<protein>
    <recommendedName>
        <fullName>Probable zinc metalloprotease PTRG_04772</fullName>
        <ecNumber>3.4.-.-</ecNumber>
    </recommendedName>
</protein>
<name>M28P3_PYRTR</name>
<evidence type="ECO:0000250" key="1"/>
<evidence type="ECO:0000255" key="2"/>
<evidence type="ECO:0000255" key="3">
    <source>
        <dbReference type="PROSITE-ProRule" id="PRU00316"/>
    </source>
</evidence>
<evidence type="ECO:0000305" key="4"/>
<comment type="cofactor">
    <cofactor evidence="1">
        <name>Zn(2+)</name>
        <dbReference type="ChEBI" id="CHEBI:29105"/>
    </cofactor>
    <text evidence="1">Binds 2 Zn(2+) ions per subunit.</text>
</comment>
<comment type="subcellular location">
    <subcellularLocation>
        <location evidence="4">Secreted</location>
    </subcellularLocation>
</comment>
<comment type="similarity">
    <text evidence="4">Belongs to the peptidase M28 family. M28B subfamily.</text>
</comment>
<accession>B2W572</accession>
<reference key="1">
    <citation type="journal article" date="2013" name="G3 (Bethesda)">
        <title>Comparative genomics of a plant-pathogenic fungus, Pyrenophora tritici-repentis, reveals transduplication and the impact of repeat elements on pathogenicity and population divergence.</title>
        <authorList>
            <person name="Manning V.A."/>
            <person name="Pandelova I."/>
            <person name="Dhillon B."/>
            <person name="Wilhelm L.J."/>
            <person name="Goodwin S.B."/>
            <person name="Berlin A.M."/>
            <person name="Figueroa M."/>
            <person name="Freitag M."/>
            <person name="Hane J.K."/>
            <person name="Henrissat B."/>
            <person name="Holman W.H."/>
            <person name="Kodira C.D."/>
            <person name="Martin J."/>
            <person name="Oliver R.P."/>
            <person name="Robbertse B."/>
            <person name="Schackwitz W."/>
            <person name="Schwartz D.C."/>
            <person name="Spatafora J.W."/>
            <person name="Turgeon B.G."/>
            <person name="Yandava C."/>
            <person name="Young S."/>
            <person name="Zhou S."/>
            <person name="Zeng Q."/>
            <person name="Grigoriev I.V."/>
            <person name="Ma L.-J."/>
            <person name="Ciuffetti L.M."/>
        </authorList>
    </citation>
    <scope>NUCLEOTIDE SEQUENCE [LARGE SCALE GENOMIC DNA]</scope>
    <source>
        <strain>Pt-1C-BFP</strain>
    </source>
</reference>
<sequence length="434" mass="48075">MPDEDLQDILSQISRDNIESTIRKLVSFGTRHTLSSQTDPVRGVGAARTWLTAKFQEAADESEGKMTVDWNSFIKYPGDNERIIFPVNITTIVATLKGSEDPDRYYLTGGHYDSRNSNPIDYQGDAPGAVDDASGVAVSLELARIFAHYKPKSTIVFTAFAGEEQGLLGAQNLAQTYKNASVNLAAMINLDMVGNSKAEDGTTDPHNIRLFCQGTPLTENATTMTSRLSIGGDNDSPARNLGRFIYEVASNVWTEMTVRVIYRLDRYSRGGDHRPFLEAGYTGVRFVQPNEDYTQQHQNVTVRNGKQYGDLTQWLDFEYNTRAAKVVATTMWSLANAPASPTNVGINTTMSDNFSQFKWDAPKGLPVEGYEILYRETIEPHWTNVIDVGNVTWYNLTSATIHKDNVIFGVRSVGKGGYKSPAVLPFPFGCARNC</sequence>
<organism>
    <name type="scientific">Pyrenophora tritici-repentis (strain Pt-1C-BFP)</name>
    <name type="common">Wheat tan spot fungus</name>
    <name type="synonym">Drechslera tritici-repentis</name>
    <dbReference type="NCBI Taxonomy" id="426418"/>
    <lineage>
        <taxon>Eukaryota</taxon>
        <taxon>Fungi</taxon>
        <taxon>Dikarya</taxon>
        <taxon>Ascomycota</taxon>
        <taxon>Pezizomycotina</taxon>
        <taxon>Dothideomycetes</taxon>
        <taxon>Pleosporomycetidae</taxon>
        <taxon>Pleosporales</taxon>
        <taxon>Pleosporineae</taxon>
        <taxon>Pleosporaceae</taxon>
        <taxon>Pyrenophora</taxon>
    </lineage>
</organism>
<gene>
    <name type="ORF">PTRG_04772</name>
</gene>
<dbReference type="EC" id="3.4.-.-"/>
<dbReference type="EMBL" id="DS231618">
    <property type="protein sequence ID" value="EDU47679.1"/>
    <property type="molecule type" value="Genomic_DNA"/>
</dbReference>
<dbReference type="RefSeq" id="XP_001935105.1">
    <property type="nucleotide sequence ID" value="XM_001935070.1"/>
</dbReference>
<dbReference type="SMR" id="B2W572"/>
<dbReference type="STRING" id="426418.B2W572"/>
<dbReference type="EnsemblFungi" id="EDU47679">
    <property type="protein sequence ID" value="EDU47679"/>
    <property type="gene ID" value="PTRG_04772"/>
</dbReference>
<dbReference type="GeneID" id="6343014"/>
<dbReference type="KEGG" id="ptrr:6343014"/>
<dbReference type="eggNOG" id="KOG2195">
    <property type="taxonomic scope" value="Eukaryota"/>
</dbReference>
<dbReference type="HOGENOM" id="CLU_047420_0_0_1"/>
<dbReference type="InParanoid" id="B2W572"/>
<dbReference type="OMA" id="FEYNTRA"/>
<dbReference type="OrthoDB" id="9647at28556"/>
<dbReference type="Proteomes" id="UP000001471">
    <property type="component" value="Unassembled WGS sequence"/>
</dbReference>
<dbReference type="GO" id="GO:0005576">
    <property type="term" value="C:extracellular region"/>
    <property type="evidence" value="ECO:0007669"/>
    <property type="project" value="UniProtKB-SubCell"/>
</dbReference>
<dbReference type="GO" id="GO:0046872">
    <property type="term" value="F:metal ion binding"/>
    <property type="evidence" value="ECO:0007669"/>
    <property type="project" value="UniProtKB-KW"/>
</dbReference>
<dbReference type="GO" id="GO:0008235">
    <property type="term" value="F:metalloexopeptidase activity"/>
    <property type="evidence" value="ECO:0007669"/>
    <property type="project" value="InterPro"/>
</dbReference>
<dbReference type="GO" id="GO:0006508">
    <property type="term" value="P:proteolysis"/>
    <property type="evidence" value="ECO:0007669"/>
    <property type="project" value="UniProtKB-KW"/>
</dbReference>
<dbReference type="CDD" id="cd00063">
    <property type="entry name" value="FN3"/>
    <property type="match status" value="1"/>
</dbReference>
<dbReference type="CDD" id="cd05642">
    <property type="entry name" value="M28_like"/>
    <property type="match status" value="1"/>
</dbReference>
<dbReference type="Gene3D" id="2.60.40.10">
    <property type="entry name" value="Immunoglobulins"/>
    <property type="match status" value="1"/>
</dbReference>
<dbReference type="Gene3D" id="3.40.630.10">
    <property type="entry name" value="Zn peptidases"/>
    <property type="match status" value="1"/>
</dbReference>
<dbReference type="InterPro" id="IPR003961">
    <property type="entry name" value="FN3_dom"/>
</dbReference>
<dbReference type="InterPro" id="IPR036116">
    <property type="entry name" value="FN3_sf"/>
</dbReference>
<dbReference type="InterPro" id="IPR013783">
    <property type="entry name" value="Ig-like_fold"/>
</dbReference>
<dbReference type="InterPro" id="IPR045175">
    <property type="entry name" value="M28_fam"/>
</dbReference>
<dbReference type="InterPro" id="IPR007484">
    <property type="entry name" value="Peptidase_M28"/>
</dbReference>
<dbReference type="PANTHER" id="PTHR12147">
    <property type="entry name" value="METALLOPEPTIDASE M28 FAMILY MEMBER"/>
    <property type="match status" value="1"/>
</dbReference>
<dbReference type="PANTHER" id="PTHR12147:SF26">
    <property type="entry name" value="PEPTIDASE M28 DOMAIN-CONTAINING PROTEIN"/>
    <property type="match status" value="1"/>
</dbReference>
<dbReference type="Pfam" id="PF04389">
    <property type="entry name" value="Peptidase_M28"/>
    <property type="match status" value="1"/>
</dbReference>
<dbReference type="SUPFAM" id="SSF49265">
    <property type="entry name" value="Fibronectin type III"/>
    <property type="match status" value="1"/>
</dbReference>
<dbReference type="SUPFAM" id="SSF53187">
    <property type="entry name" value="Zn-dependent exopeptidases"/>
    <property type="match status" value="1"/>
</dbReference>
<dbReference type="PROSITE" id="PS50853">
    <property type="entry name" value="FN3"/>
    <property type="match status" value="1"/>
</dbReference>
<feature type="signal peptide" evidence="2">
    <location>
        <begin position="1"/>
        <end status="unknown"/>
    </location>
</feature>
<feature type="chain" id="PRO_0000411767" description="Probable zinc metalloprotease PTRG_04772">
    <location>
        <begin status="unknown"/>
        <end position="434"/>
    </location>
</feature>
<feature type="domain" description="Fibronectin type-III" evidence="3">
    <location>
        <begin position="340"/>
        <end position="433"/>
    </location>
</feature>
<feature type="binding site" evidence="1">
    <location>
        <position position="111"/>
    </location>
    <ligand>
        <name>Zn(2+)</name>
        <dbReference type="ChEBI" id="CHEBI:29105"/>
        <label>1</label>
    </ligand>
</feature>
<feature type="binding site" evidence="1">
    <location>
        <position position="131"/>
    </location>
    <ligand>
        <name>Zn(2+)</name>
        <dbReference type="ChEBI" id="CHEBI:29105"/>
        <label>1</label>
    </ligand>
</feature>
<feature type="binding site" evidence="1">
    <location>
        <position position="131"/>
    </location>
    <ligand>
        <name>Zn(2+)</name>
        <dbReference type="ChEBI" id="CHEBI:29105"/>
        <label>2</label>
        <note>catalytic</note>
    </ligand>
</feature>
<feature type="binding site" evidence="1">
    <location>
        <position position="164"/>
    </location>
    <ligand>
        <name>Zn(2+)</name>
        <dbReference type="ChEBI" id="CHEBI:29105"/>
        <label>2</label>
        <note>catalytic</note>
    </ligand>
</feature>
<feature type="binding site" evidence="1">
    <location>
        <position position="191"/>
    </location>
    <ligand>
        <name>Zn(2+)</name>
        <dbReference type="ChEBI" id="CHEBI:29105"/>
        <label>1</label>
    </ligand>
</feature>
<feature type="glycosylation site" description="N-linked (GlcNAc...) asparagine" evidence="2">
    <location>
        <position position="88"/>
    </location>
</feature>
<feature type="glycosylation site" description="N-linked (GlcNAc...) asparagine" evidence="2">
    <location>
        <position position="179"/>
    </location>
</feature>
<feature type="glycosylation site" description="N-linked (GlcNAc...) asparagine" evidence="2">
    <location>
        <position position="220"/>
    </location>
</feature>
<feature type="glycosylation site" description="N-linked (GlcNAc...) asparagine" evidence="2">
    <location>
        <position position="299"/>
    </location>
</feature>
<feature type="glycosylation site" description="N-linked (GlcNAc...) asparagine" evidence="2">
    <location>
        <position position="347"/>
    </location>
</feature>
<feature type="glycosylation site" description="N-linked (GlcNAc...) asparagine" evidence="2">
    <location>
        <position position="353"/>
    </location>
</feature>
<feature type="glycosylation site" description="N-linked (GlcNAc...) asparagine" evidence="2">
    <location>
        <position position="390"/>
    </location>
</feature>
<feature type="glycosylation site" description="N-linked (GlcNAc...) asparagine" evidence="2">
    <location>
        <position position="395"/>
    </location>
</feature>